<sequence>MIKLKNISKIFDVAGKKLNALDNVSLDIPKGDICGVIGASGAGKSTLIRCVNLLERPTSGSVFVDGQDLTQLSEAQLIAERRNIGMIFQHFNLLSSRTVYENVALPLTLEHMAKEKIHEKVTALLALVGLTDKKDVYPANLSGGQKQRVAIARALASDPKVLLCDEATSALDPATTQSILKLLKEINRTLGITILLITHEMDVVKNICDQVAVIDKGQLIEQGSVSEIFSNPKTELAQEFIRSTFQANLPEEYLAKLTDTPKRSDSYPIIRFEFTGRSVDAPLLSQTSRKFNVSFNILVSQIDYAGGTKFGFTIAEVEGDEDSITQAKIYLMESNVRVEVLGYVD</sequence>
<accession>Q65VG9</accession>
<proteinExistence type="inferred from homology"/>
<organism>
    <name type="scientific">Mannheimia succiniciproducens (strain KCTC 0769BP / MBEL55E)</name>
    <dbReference type="NCBI Taxonomy" id="221988"/>
    <lineage>
        <taxon>Bacteria</taxon>
        <taxon>Pseudomonadati</taxon>
        <taxon>Pseudomonadota</taxon>
        <taxon>Gammaproteobacteria</taxon>
        <taxon>Pasteurellales</taxon>
        <taxon>Pasteurellaceae</taxon>
        <taxon>Basfia</taxon>
    </lineage>
</organism>
<gene>
    <name evidence="1" type="primary">metN</name>
    <name type="ordered locus">MS0434</name>
</gene>
<name>METN_MANSM</name>
<keyword id="KW-0029">Amino-acid transport</keyword>
<keyword id="KW-0067">ATP-binding</keyword>
<keyword id="KW-0997">Cell inner membrane</keyword>
<keyword id="KW-1003">Cell membrane</keyword>
<keyword id="KW-0472">Membrane</keyword>
<keyword id="KW-0547">Nucleotide-binding</keyword>
<keyword id="KW-1278">Translocase</keyword>
<keyword id="KW-0813">Transport</keyword>
<feature type="chain" id="PRO_0000270332" description="Methionine import ATP-binding protein MetN">
    <location>
        <begin position="1"/>
        <end position="345"/>
    </location>
</feature>
<feature type="domain" description="ABC transporter" evidence="1">
    <location>
        <begin position="2"/>
        <end position="241"/>
    </location>
</feature>
<feature type="binding site" evidence="1">
    <location>
        <begin position="38"/>
        <end position="45"/>
    </location>
    <ligand>
        <name>ATP</name>
        <dbReference type="ChEBI" id="CHEBI:30616"/>
    </ligand>
</feature>
<protein>
    <recommendedName>
        <fullName evidence="1">Methionine import ATP-binding protein MetN</fullName>
        <ecNumber evidence="1">7.4.2.11</ecNumber>
    </recommendedName>
</protein>
<reference key="1">
    <citation type="journal article" date="2004" name="Nat. Biotechnol.">
        <title>The genome sequence of the capnophilic rumen bacterium Mannheimia succiniciproducens.</title>
        <authorList>
            <person name="Hong S.H."/>
            <person name="Kim J.S."/>
            <person name="Lee S.Y."/>
            <person name="In Y.H."/>
            <person name="Choi S.S."/>
            <person name="Rih J.-K."/>
            <person name="Kim C.H."/>
            <person name="Jeong H."/>
            <person name="Hur C.G."/>
            <person name="Kim J.J."/>
        </authorList>
    </citation>
    <scope>NUCLEOTIDE SEQUENCE [LARGE SCALE GENOMIC DNA]</scope>
    <source>
        <strain>KCTC 0769BP / MBEL55E</strain>
    </source>
</reference>
<dbReference type="EC" id="7.4.2.11" evidence="1"/>
<dbReference type="EMBL" id="AE016827">
    <property type="protein sequence ID" value="AAU37041.1"/>
    <property type="molecule type" value="Genomic_DNA"/>
</dbReference>
<dbReference type="RefSeq" id="WP_011199616.1">
    <property type="nucleotide sequence ID" value="NC_006300.1"/>
</dbReference>
<dbReference type="SMR" id="Q65VG9"/>
<dbReference type="STRING" id="221988.MS0434"/>
<dbReference type="KEGG" id="msu:MS0434"/>
<dbReference type="eggNOG" id="COG1135">
    <property type="taxonomic scope" value="Bacteria"/>
</dbReference>
<dbReference type="HOGENOM" id="CLU_000604_1_3_6"/>
<dbReference type="OrthoDB" id="9802264at2"/>
<dbReference type="Proteomes" id="UP000000607">
    <property type="component" value="Chromosome"/>
</dbReference>
<dbReference type="GO" id="GO:0009276">
    <property type="term" value="C:Gram-negative-bacterium-type cell wall"/>
    <property type="evidence" value="ECO:0007669"/>
    <property type="project" value="InterPro"/>
</dbReference>
<dbReference type="GO" id="GO:0005886">
    <property type="term" value="C:plasma membrane"/>
    <property type="evidence" value="ECO:0007669"/>
    <property type="project" value="UniProtKB-SubCell"/>
</dbReference>
<dbReference type="GO" id="GO:0033232">
    <property type="term" value="F:ABC-type D-methionine transporter activity"/>
    <property type="evidence" value="ECO:0007669"/>
    <property type="project" value="UniProtKB-EC"/>
</dbReference>
<dbReference type="GO" id="GO:0005524">
    <property type="term" value="F:ATP binding"/>
    <property type="evidence" value="ECO:0007669"/>
    <property type="project" value="UniProtKB-KW"/>
</dbReference>
<dbReference type="GO" id="GO:0016887">
    <property type="term" value="F:ATP hydrolysis activity"/>
    <property type="evidence" value="ECO:0007669"/>
    <property type="project" value="InterPro"/>
</dbReference>
<dbReference type="CDD" id="cd03258">
    <property type="entry name" value="ABC_MetN_methionine_transporter"/>
    <property type="match status" value="1"/>
</dbReference>
<dbReference type="FunFam" id="3.40.50.300:FF:000233">
    <property type="entry name" value="Methionine import ATP-binding protein MetN"/>
    <property type="match status" value="1"/>
</dbReference>
<dbReference type="Gene3D" id="3.30.70.260">
    <property type="match status" value="1"/>
</dbReference>
<dbReference type="Gene3D" id="3.40.50.300">
    <property type="entry name" value="P-loop containing nucleotide triphosphate hydrolases"/>
    <property type="match status" value="1"/>
</dbReference>
<dbReference type="InterPro" id="IPR003593">
    <property type="entry name" value="AAA+_ATPase"/>
</dbReference>
<dbReference type="InterPro" id="IPR012692">
    <property type="entry name" value="ABC_MetN_proteobac"/>
</dbReference>
<dbReference type="InterPro" id="IPR003439">
    <property type="entry name" value="ABC_transporter-like_ATP-bd"/>
</dbReference>
<dbReference type="InterPro" id="IPR017871">
    <property type="entry name" value="ABC_transporter-like_CS"/>
</dbReference>
<dbReference type="InterPro" id="IPR045865">
    <property type="entry name" value="ACT-like_dom_sf"/>
</dbReference>
<dbReference type="InterPro" id="IPR041701">
    <property type="entry name" value="MetN_ABC"/>
</dbReference>
<dbReference type="InterPro" id="IPR050086">
    <property type="entry name" value="MetN_ABC_transporter-like"/>
</dbReference>
<dbReference type="InterPro" id="IPR018449">
    <property type="entry name" value="NIL_domain"/>
</dbReference>
<dbReference type="InterPro" id="IPR027417">
    <property type="entry name" value="P-loop_NTPase"/>
</dbReference>
<dbReference type="NCBIfam" id="TIGR02314">
    <property type="entry name" value="ABC_MetN"/>
    <property type="match status" value="1"/>
</dbReference>
<dbReference type="PANTHER" id="PTHR43166">
    <property type="entry name" value="AMINO ACID IMPORT ATP-BINDING PROTEIN"/>
    <property type="match status" value="1"/>
</dbReference>
<dbReference type="PANTHER" id="PTHR43166:SF30">
    <property type="entry name" value="METHIONINE IMPORT ATP-BINDING PROTEIN METN"/>
    <property type="match status" value="1"/>
</dbReference>
<dbReference type="Pfam" id="PF00005">
    <property type="entry name" value="ABC_tran"/>
    <property type="match status" value="1"/>
</dbReference>
<dbReference type="Pfam" id="PF09383">
    <property type="entry name" value="NIL"/>
    <property type="match status" value="1"/>
</dbReference>
<dbReference type="SMART" id="SM00382">
    <property type="entry name" value="AAA"/>
    <property type="match status" value="1"/>
</dbReference>
<dbReference type="SMART" id="SM00930">
    <property type="entry name" value="NIL"/>
    <property type="match status" value="1"/>
</dbReference>
<dbReference type="SUPFAM" id="SSF55021">
    <property type="entry name" value="ACT-like"/>
    <property type="match status" value="1"/>
</dbReference>
<dbReference type="SUPFAM" id="SSF52540">
    <property type="entry name" value="P-loop containing nucleoside triphosphate hydrolases"/>
    <property type="match status" value="1"/>
</dbReference>
<dbReference type="PROSITE" id="PS00211">
    <property type="entry name" value="ABC_TRANSPORTER_1"/>
    <property type="match status" value="1"/>
</dbReference>
<dbReference type="PROSITE" id="PS50893">
    <property type="entry name" value="ABC_TRANSPORTER_2"/>
    <property type="match status" value="1"/>
</dbReference>
<dbReference type="PROSITE" id="PS51264">
    <property type="entry name" value="METN"/>
    <property type="match status" value="1"/>
</dbReference>
<comment type="function">
    <text evidence="1">Part of the ABC transporter complex MetNIQ involved in methionine import. Responsible for energy coupling to the transport system.</text>
</comment>
<comment type="catalytic activity">
    <reaction evidence="1">
        <text>L-methionine(out) + ATP + H2O = L-methionine(in) + ADP + phosphate + H(+)</text>
        <dbReference type="Rhea" id="RHEA:29779"/>
        <dbReference type="ChEBI" id="CHEBI:15377"/>
        <dbReference type="ChEBI" id="CHEBI:15378"/>
        <dbReference type="ChEBI" id="CHEBI:30616"/>
        <dbReference type="ChEBI" id="CHEBI:43474"/>
        <dbReference type="ChEBI" id="CHEBI:57844"/>
        <dbReference type="ChEBI" id="CHEBI:456216"/>
        <dbReference type="EC" id="7.4.2.11"/>
    </reaction>
</comment>
<comment type="catalytic activity">
    <reaction evidence="1">
        <text>D-methionine(out) + ATP + H2O = D-methionine(in) + ADP + phosphate + H(+)</text>
        <dbReference type="Rhea" id="RHEA:29767"/>
        <dbReference type="ChEBI" id="CHEBI:15377"/>
        <dbReference type="ChEBI" id="CHEBI:15378"/>
        <dbReference type="ChEBI" id="CHEBI:30616"/>
        <dbReference type="ChEBI" id="CHEBI:43474"/>
        <dbReference type="ChEBI" id="CHEBI:57932"/>
        <dbReference type="ChEBI" id="CHEBI:456216"/>
        <dbReference type="EC" id="7.4.2.11"/>
    </reaction>
</comment>
<comment type="subunit">
    <text evidence="1">The complex is composed of two ATP-binding proteins (MetN), two transmembrane proteins (MetI) and a solute-binding protein (MetQ).</text>
</comment>
<comment type="subcellular location">
    <subcellularLocation>
        <location evidence="1">Cell inner membrane</location>
        <topology evidence="1">Peripheral membrane protein</topology>
    </subcellularLocation>
</comment>
<comment type="similarity">
    <text evidence="1">Belongs to the ABC transporter superfamily. Methionine importer (TC 3.A.1.24) family.</text>
</comment>
<evidence type="ECO:0000255" key="1">
    <source>
        <dbReference type="HAMAP-Rule" id="MF_01719"/>
    </source>
</evidence>